<evidence type="ECO:0000255" key="1">
    <source>
        <dbReference type="HAMAP-Rule" id="MF_00528"/>
    </source>
</evidence>
<comment type="function">
    <text evidence="1">Nucleoside triphosphate pyrophosphatase that hydrolyzes dTTP and UTP. May have a dual role in cell division arrest and in preventing the incorporation of modified nucleotides into cellular nucleic acids.</text>
</comment>
<comment type="catalytic activity">
    <reaction evidence="1">
        <text>dTTP + H2O = dTMP + diphosphate + H(+)</text>
        <dbReference type="Rhea" id="RHEA:28534"/>
        <dbReference type="ChEBI" id="CHEBI:15377"/>
        <dbReference type="ChEBI" id="CHEBI:15378"/>
        <dbReference type="ChEBI" id="CHEBI:33019"/>
        <dbReference type="ChEBI" id="CHEBI:37568"/>
        <dbReference type="ChEBI" id="CHEBI:63528"/>
        <dbReference type="EC" id="3.6.1.9"/>
    </reaction>
</comment>
<comment type="catalytic activity">
    <reaction evidence="1">
        <text>UTP + H2O = UMP + diphosphate + H(+)</text>
        <dbReference type="Rhea" id="RHEA:29395"/>
        <dbReference type="ChEBI" id="CHEBI:15377"/>
        <dbReference type="ChEBI" id="CHEBI:15378"/>
        <dbReference type="ChEBI" id="CHEBI:33019"/>
        <dbReference type="ChEBI" id="CHEBI:46398"/>
        <dbReference type="ChEBI" id="CHEBI:57865"/>
        <dbReference type="EC" id="3.6.1.9"/>
    </reaction>
</comment>
<comment type="cofactor">
    <cofactor evidence="1">
        <name>a divalent metal cation</name>
        <dbReference type="ChEBI" id="CHEBI:60240"/>
    </cofactor>
</comment>
<comment type="subcellular location">
    <subcellularLocation>
        <location evidence="1">Cytoplasm</location>
    </subcellularLocation>
</comment>
<comment type="similarity">
    <text evidence="1">Belongs to the Maf family. YhdE subfamily.</text>
</comment>
<protein>
    <recommendedName>
        <fullName evidence="1">dTTP/UTP pyrophosphatase</fullName>
        <shortName evidence="1">dTTPase/UTPase</shortName>
        <ecNumber evidence="1">3.6.1.9</ecNumber>
    </recommendedName>
    <alternativeName>
        <fullName evidence="1">Nucleoside triphosphate pyrophosphatase</fullName>
    </alternativeName>
    <alternativeName>
        <fullName evidence="1">Nucleotide pyrophosphatase</fullName>
        <shortName evidence="1">Nucleotide PPase</shortName>
    </alternativeName>
</protein>
<dbReference type="EC" id="3.6.1.9" evidence="1"/>
<dbReference type="EMBL" id="CP000394">
    <property type="protein sequence ID" value="ABI61927.1"/>
    <property type="molecule type" value="Genomic_DNA"/>
</dbReference>
<dbReference type="SMR" id="Q0BTC5"/>
<dbReference type="STRING" id="391165.GbCGDNIH1_1029"/>
<dbReference type="KEGG" id="gbe:GbCGDNIH1_1029"/>
<dbReference type="eggNOG" id="COG0424">
    <property type="taxonomic scope" value="Bacteria"/>
</dbReference>
<dbReference type="HOGENOM" id="CLU_040416_2_0_5"/>
<dbReference type="Proteomes" id="UP000001963">
    <property type="component" value="Chromosome"/>
</dbReference>
<dbReference type="GO" id="GO:0005737">
    <property type="term" value="C:cytoplasm"/>
    <property type="evidence" value="ECO:0007669"/>
    <property type="project" value="UniProtKB-SubCell"/>
</dbReference>
<dbReference type="GO" id="GO:0036218">
    <property type="term" value="F:dTTP diphosphatase activity"/>
    <property type="evidence" value="ECO:0007669"/>
    <property type="project" value="RHEA"/>
</dbReference>
<dbReference type="GO" id="GO:0036221">
    <property type="term" value="F:UTP diphosphatase activity"/>
    <property type="evidence" value="ECO:0007669"/>
    <property type="project" value="RHEA"/>
</dbReference>
<dbReference type="GO" id="GO:0009117">
    <property type="term" value="P:nucleotide metabolic process"/>
    <property type="evidence" value="ECO:0007669"/>
    <property type="project" value="UniProtKB-KW"/>
</dbReference>
<dbReference type="CDD" id="cd00555">
    <property type="entry name" value="Maf"/>
    <property type="match status" value="1"/>
</dbReference>
<dbReference type="Gene3D" id="3.90.950.10">
    <property type="match status" value="1"/>
</dbReference>
<dbReference type="HAMAP" id="MF_00528">
    <property type="entry name" value="Maf"/>
    <property type="match status" value="1"/>
</dbReference>
<dbReference type="InterPro" id="IPR029001">
    <property type="entry name" value="ITPase-like_fam"/>
</dbReference>
<dbReference type="InterPro" id="IPR003697">
    <property type="entry name" value="Maf-like"/>
</dbReference>
<dbReference type="NCBIfam" id="TIGR00172">
    <property type="entry name" value="maf"/>
    <property type="match status" value="1"/>
</dbReference>
<dbReference type="PANTHER" id="PTHR43213">
    <property type="entry name" value="BIFUNCTIONAL DTTP/UTP PYROPHOSPHATASE/METHYLTRANSFERASE PROTEIN-RELATED"/>
    <property type="match status" value="1"/>
</dbReference>
<dbReference type="PANTHER" id="PTHR43213:SF5">
    <property type="entry name" value="BIFUNCTIONAL DTTP_UTP PYROPHOSPHATASE_METHYLTRANSFERASE PROTEIN-RELATED"/>
    <property type="match status" value="1"/>
</dbReference>
<dbReference type="Pfam" id="PF02545">
    <property type="entry name" value="Maf"/>
    <property type="match status" value="1"/>
</dbReference>
<dbReference type="PIRSF" id="PIRSF006305">
    <property type="entry name" value="Maf"/>
    <property type="match status" value="1"/>
</dbReference>
<dbReference type="SUPFAM" id="SSF52972">
    <property type="entry name" value="ITPase-like"/>
    <property type="match status" value="1"/>
</dbReference>
<gene>
    <name type="ordered locus">GbCGDNIH1_1029</name>
</gene>
<reference key="1">
    <citation type="journal article" date="2007" name="J. Bacteriol.">
        <title>Genome sequence analysis of the emerging human pathogenic acetic acid bacterium Granulibacter bethesdensis.</title>
        <authorList>
            <person name="Greenberg D.E."/>
            <person name="Porcella S.F."/>
            <person name="Zelazny A.M."/>
            <person name="Virtaneva K."/>
            <person name="Sturdevant D.E."/>
            <person name="Kupko J.J. III"/>
            <person name="Barbian K.D."/>
            <person name="Babar A."/>
            <person name="Dorward D.W."/>
            <person name="Holland S.M."/>
        </authorList>
    </citation>
    <scope>NUCLEOTIDE SEQUENCE [LARGE SCALE GENOMIC DNA]</scope>
    <source>
        <strain>ATCC BAA-1260 / CGDNIH1</strain>
    </source>
</reference>
<sequence>MMPDQPATACPLVLASASPRRAALLAQIGVIPALTLATDIDETPLKGEVPLKGEVPRLLSRRLAQGKADTAIRVLREQSDAPLAAPFILAADTVVAVGRRALPKAETEAEARQCLTLLSGRRHHVWTTVVVIAPDGKRAERIVESAVTFNRMTDLQQEAYIASGEWRGKAGGYAIQGLAAAYIRFLSGSYSNVVGLPLFETAQLLRGLGFRSL</sequence>
<keyword id="KW-0963">Cytoplasm</keyword>
<keyword id="KW-0378">Hydrolase</keyword>
<keyword id="KW-0546">Nucleotide metabolism</keyword>
<keyword id="KW-1185">Reference proteome</keyword>
<feature type="chain" id="PRO_0000267317" description="dTTP/UTP pyrophosphatase">
    <location>
        <begin position="1"/>
        <end position="213"/>
    </location>
</feature>
<feature type="active site" description="Proton acceptor" evidence="1">
    <location>
        <position position="92"/>
    </location>
</feature>
<feature type="site" description="Important for substrate specificity" evidence="1">
    <location>
        <position position="20"/>
    </location>
</feature>
<feature type="site" description="Important for substrate specificity" evidence="1">
    <location>
        <position position="93"/>
    </location>
</feature>
<feature type="site" description="Important for substrate specificity" evidence="1">
    <location>
        <position position="176"/>
    </location>
</feature>
<accession>Q0BTC5</accession>
<organism>
    <name type="scientific">Granulibacter bethesdensis (strain ATCC BAA-1260 / CGDNIH1)</name>
    <dbReference type="NCBI Taxonomy" id="391165"/>
    <lineage>
        <taxon>Bacteria</taxon>
        <taxon>Pseudomonadati</taxon>
        <taxon>Pseudomonadota</taxon>
        <taxon>Alphaproteobacteria</taxon>
        <taxon>Acetobacterales</taxon>
        <taxon>Acetobacteraceae</taxon>
        <taxon>Granulibacter</taxon>
    </lineage>
</organism>
<proteinExistence type="inferred from homology"/>
<name>NTPPA_GRABC</name>